<name>Y4490_PSEAE</name>
<organism>
    <name type="scientific">Pseudomonas aeruginosa (strain ATCC 15692 / DSM 22644 / CIP 104116 / JCM 14847 / LMG 12228 / 1C / PRS 101 / PAO1)</name>
    <dbReference type="NCBI Taxonomy" id="208964"/>
    <lineage>
        <taxon>Bacteria</taxon>
        <taxon>Pseudomonadati</taxon>
        <taxon>Pseudomonadota</taxon>
        <taxon>Gammaproteobacteria</taxon>
        <taxon>Pseudomonadales</taxon>
        <taxon>Pseudomonadaceae</taxon>
        <taxon>Pseudomonas</taxon>
    </lineage>
</organism>
<feature type="signal peptide" evidence="1">
    <location>
        <begin position="1"/>
        <end position="21"/>
    </location>
</feature>
<feature type="chain" id="PRO_0000014216" description="Uncharacterized protein PA4490">
    <location>
        <begin position="22"/>
        <end position="212"/>
    </location>
</feature>
<feature type="helix" evidence="3">
    <location>
        <begin position="29"/>
        <end position="45"/>
    </location>
</feature>
<feature type="helix" evidence="3">
    <location>
        <begin position="46"/>
        <end position="48"/>
    </location>
</feature>
<feature type="strand" evidence="3">
    <location>
        <begin position="55"/>
        <end position="59"/>
    </location>
</feature>
<feature type="helix" evidence="3">
    <location>
        <begin position="60"/>
        <end position="71"/>
    </location>
</feature>
<feature type="helix" evidence="3">
    <location>
        <begin position="77"/>
        <end position="82"/>
    </location>
</feature>
<feature type="helix" evidence="3">
    <location>
        <begin position="98"/>
        <end position="101"/>
    </location>
</feature>
<feature type="helix" evidence="3">
    <location>
        <begin position="103"/>
        <end position="105"/>
    </location>
</feature>
<feature type="strand" evidence="3">
    <location>
        <begin position="107"/>
        <end position="110"/>
    </location>
</feature>
<feature type="strand" evidence="3">
    <location>
        <begin position="113"/>
        <end position="116"/>
    </location>
</feature>
<feature type="helix" evidence="3">
    <location>
        <begin position="120"/>
        <end position="127"/>
    </location>
</feature>
<feature type="strand" evidence="3">
    <location>
        <begin position="128"/>
        <end position="133"/>
    </location>
</feature>
<feature type="helix" evidence="3">
    <location>
        <begin position="135"/>
        <end position="137"/>
    </location>
</feature>
<feature type="strand" evidence="3">
    <location>
        <begin position="143"/>
        <end position="147"/>
    </location>
</feature>
<feature type="strand" evidence="3">
    <location>
        <begin position="152"/>
        <end position="157"/>
    </location>
</feature>
<feature type="strand" evidence="3">
    <location>
        <begin position="159"/>
        <end position="165"/>
    </location>
</feature>
<feature type="strand" evidence="3">
    <location>
        <begin position="176"/>
        <end position="179"/>
    </location>
</feature>
<feature type="helix" evidence="3">
    <location>
        <begin position="181"/>
        <end position="185"/>
    </location>
</feature>
<feature type="helix" evidence="3">
    <location>
        <begin position="190"/>
        <end position="192"/>
    </location>
</feature>
<feature type="strand" evidence="3">
    <location>
        <begin position="201"/>
        <end position="207"/>
    </location>
</feature>
<proteinExistence type="evidence at protein level"/>
<sequence>MRRLTAFGLALLLLASGVARGEPAVTLDPQQSQVFRAWFVRIAQEQLRQGPSPRWHQQDCAGLVRFAANEALKVHDGKWLRANGLSNRYLPPELALSPEQRRLAQNWQQGGGQVGPYVNAIKLVQFNSRLVGRDLNQARPGDLMFYDQGDDQHLMIWMGRSIAYHTGSSTPTDNGMRSVSLQQLMTWKDTRWIPDESNPNFIGIYRLAFLSQ</sequence>
<keyword id="KW-0002">3D-structure</keyword>
<keyword id="KW-1185">Reference proteome</keyword>
<keyword id="KW-0732">Signal</keyword>
<evidence type="ECO:0000255" key="1"/>
<evidence type="ECO:0000305" key="2"/>
<evidence type="ECO:0007829" key="3">
    <source>
        <dbReference type="PDB" id="7BK8"/>
    </source>
</evidence>
<accession>Q9HVT1</accession>
<gene>
    <name type="ordered locus">PA4490</name>
</gene>
<reference key="1">
    <citation type="journal article" date="2000" name="Nature">
        <title>Complete genome sequence of Pseudomonas aeruginosa PAO1, an opportunistic pathogen.</title>
        <authorList>
            <person name="Stover C.K."/>
            <person name="Pham X.-Q.T."/>
            <person name="Erwin A.L."/>
            <person name="Mizoguchi S.D."/>
            <person name="Warrener P."/>
            <person name="Hickey M.J."/>
            <person name="Brinkman F.S.L."/>
            <person name="Hufnagle W.O."/>
            <person name="Kowalik D.J."/>
            <person name="Lagrou M."/>
            <person name="Garber R.L."/>
            <person name="Goltry L."/>
            <person name="Tolentino E."/>
            <person name="Westbrock-Wadman S."/>
            <person name="Yuan Y."/>
            <person name="Brody L.L."/>
            <person name="Coulter S.N."/>
            <person name="Folger K.R."/>
            <person name="Kas A."/>
            <person name="Larbig K."/>
            <person name="Lim R.M."/>
            <person name="Smith K.A."/>
            <person name="Spencer D.H."/>
            <person name="Wong G.K.-S."/>
            <person name="Wu Z."/>
            <person name="Paulsen I.T."/>
            <person name="Reizer J."/>
            <person name="Saier M.H. Jr."/>
            <person name="Hancock R.E.W."/>
            <person name="Lory S."/>
            <person name="Olson M.V."/>
        </authorList>
    </citation>
    <scope>NUCLEOTIDE SEQUENCE [LARGE SCALE GENOMIC DNA]</scope>
    <source>
        <strain>ATCC 15692 / DSM 22644 / CIP 104116 / JCM 14847 / LMG 12228 / 1C / PRS 101 / PAO1</strain>
    </source>
</reference>
<comment type="similarity">
    <text evidence="2">To E.coli YfaT and T.maritima TM0986.</text>
</comment>
<protein>
    <recommendedName>
        <fullName>Uncharacterized protein PA4490</fullName>
    </recommendedName>
</protein>
<dbReference type="EMBL" id="AE004091">
    <property type="protein sequence ID" value="AAG07878.1"/>
    <property type="molecule type" value="Genomic_DNA"/>
</dbReference>
<dbReference type="PIR" id="G83085">
    <property type="entry name" value="G83085"/>
</dbReference>
<dbReference type="RefSeq" id="NP_253180.1">
    <property type="nucleotide sequence ID" value="NC_002516.2"/>
</dbReference>
<dbReference type="RefSeq" id="WP_003112865.1">
    <property type="nucleotide sequence ID" value="NZ_QZGE01000004.1"/>
</dbReference>
<dbReference type="PDB" id="7BK8">
    <property type="method" value="X-ray"/>
    <property type="resolution" value="1.74 A"/>
    <property type="chains" value="A=1-212"/>
</dbReference>
<dbReference type="PDBsum" id="7BK8"/>
<dbReference type="SMR" id="Q9HVT1"/>
<dbReference type="FunCoup" id="Q9HVT1">
    <property type="interactions" value="61"/>
</dbReference>
<dbReference type="STRING" id="208964.PA4490"/>
<dbReference type="PaxDb" id="208964-PA4490"/>
<dbReference type="DNASU" id="881073"/>
<dbReference type="GeneID" id="881073"/>
<dbReference type="KEGG" id="pae:PA4490"/>
<dbReference type="PATRIC" id="fig|208964.12.peg.4700"/>
<dbReference type="PseudoCAP" id="PA4490"/>
<dbReference type="HOGENOM" id="CLU_086914_0_0_6"/>
<dbReference type="InParanoid" id="Q9HVT1"/>
<dbReference type="OrthoDB" id="320761at2"/>
<dbReference type="BioCyc" id="PAER208964:G1FZ6-4579-MONOMER"/>
<dbReference type="Proteomes" id="UP000002438">
    <property type="component" value="Chromosome"/>
</dbReference>
<dbReference type="Gene3D" id="3.90.1720.10">
    <property type="entry name" value="endopeptidase domain like (from Nostoc punctiforme)"/>
    <property type="match status" value="1"/>
</dbReference>
<dbReference type="InterPro" id="IPR009558">
    <property type="entry name" value="DUF1175"/>
</dbReference>
<dbReference type="Pfam" id="PF06672">
    <property type="entry name" value="DUF1175"/>
    <property type="match status" value="1"/>
</dbReference>